<evidence type="ECO:0000250" key="1"/>
<evidence type="ECO:0000255" key="2">
    <source>
        <dbReference type="PROSITE-ProRule" id="PRU00182"/>
    </source>
</evidence>
<evidence type="ECO:0000305" key="3"/>
<proteinExistence type="inferred from homology"/>
<comment type="catalytic activity">
    <reaction>
        <text>a uridine in RNA = a pseudouridine in RNA</text>
        <dbReference type="Rhea" id="RHEA:48348"/>
        <dbReference type="Rhea" id="RHEA-COMP:12068"/>
        <dbReference type="Rhea" id="RHEA-COMP:12069"/>
        <dbReference type="ChEBI" id="CHEBI:65314"/>
        <dbReference type="ChEBI" id="CHEBI:65315"/>
    </reaction>
</comment>
<comment type="similarity">
    <text evidence="3">Belongs to the pseudouridine synthase RluA family.</text>
</comment>
<keyword id="KW-0413">Isomerase</keyword>
<keyword id="KW-1185">Reference proteome</keyword>
<keyword id="KW-0694">RNA-binding</keyword>
<name>Y1758_AQUAE</name>
<sequence length="316" mass="36537">MKISEVLEFKVEGEEERLDKFLARAYPDFSRSYIKKLVKEGLVYVNGEEVRKPSRKLREGERVILHVPEPEPLDVKPENIPINIIYEDEDIAVVEKPCGLVVHPSPGYTSGTLVNALLYHIKDLSSIGGVERPGIVHRLDKETAGVMVIAKNNTAHRNLVRQFQERKTEKFYKVLVKGLVKKDYGAIDTPIARHPVDRKRFWVRKEGKEALTEYWVLKRYEKYEITLLKVKIHTGRTHQIRVHFASIGHPVLGDRTYGFKSSSVPKELLSLMGECNMLIAYHLGFYHPTKGEWMVFEIEEPETFKSVYSWLEEHSP</sequence>
<feature type="chain" id="PRO_0000162727" description="Uncharacterized RNA pseudouridine synthase aq_1758">
    <location>
        <begin position="1"/>
        <end position="316"/>
    </location>
</feature>
<feature type="domain" description="S4 RNA-binding" evidence="2">
    <location>
        <begin position="16"/>
        <end position="89"/>
    </location>
</feature>
<feature type="active site" evidence="1">
    <location>
        <position position="140"/>
    </location>
</feature>
<organism>
    <name type="scientific">Aquifex aeolicus (strain VF5)</name>
    <dbReference type="NCBI Taxonomy" id="224324"/>
    <lineage>
        <taxon>Bacteria</taxon>
        <taxon>Pseudomonadati</taxon>
        <taxon>Aquificota</taxon>
        <taxon>Aquificia</taxon>
        <taxon>Aquificales</taxon>
        <taxon>Aquificaceae</taxon>
        <taxon>Aquifex</taxon>
    </lineage>
</organism>
<gene>
    <name type="ordered locus">aq_1758</name>
</gene>
<reference key="1">
    <citation type="journal article" date="1998" name="Nature">
        <title>The complete genome of the hyperthermophilic bacterium Aquifex aeolicus.</title>
        <authorList>
            <person name="Deckert G."/>
            <person name="Warren P.V."/>
            <person name="Gaasterland T."/>
            <person name="Young W.G."/>
            <person name="Lenox A.L."/>
            <person name="Graham D.E."/>
            <person name="Overbeek R."/>
            <person name="Snead M.A."/>
            <person name="Keller M."/>
            <person name="Aujay M."/>
            <person name="Huber R."/>
            <person name="Feldman R.A."/>
            <person name="Short J.M."/>
            <person name="Olsen G.J."/>
            <person name="Swanson R.V."/>
        </authorList>
    </citation>
    <scope>NUCLEOTIDE SEQUENCE [LARGE SCALE GENOMIC DNA]</scope>
    <source>
        <strain>VF5</strain>
    </source>
</reference>
<accession>O67638</accession>
<dbReference type="EC" id="5.4.99.-"/>
<dbReference type="EMBL" id="AE000657">
    <property type="protein sequence ID" value="AAC07603.1"/>
    <property type="molecule type" value="Genomic_DNA"/>
</dbReference>
<dbReference type="PIR" id="D70451">
    <property type="entry name" value="D70451"/>
</dbReference>
<dbReference type="RefSeq" id="NP_214204.1">
    <property type="nucleotide sequence ID" value="NC_000918.1"/>
</dbReference>
<dbReference type="RefSeq" id="WP_010881141.1">
    <property type="nucleotide sequence ID" value="NC_000918.1"/>
</dbReference>
<dbReference type="SMR" id="O67638"/>
<dbReference type="FunCoup" id="O67638">
    <property type="interactions" value="499"/>
</dbReference>
<dbReference type="STRING" id="224324.aq_1758"/>
<dbReference type="EnsemblBacteria" id="AAC07603">
    <property type="protein sequence ID" value="AAC07603"/>
    <property type="gene ID" value="aq_1758"/>
</dbReference>
<dbReference type="KEGG" id="aae:aq_1758"/>
<dbReference type="PATRIC" id="fig|224324.8.peg.1356"/>
<dbReference type="eggNOG" id="COG0564">
    <property type="taxonomic scope" value="Bacteria"/>
</dbReference>
<dbReference type="HOGENOM" id="CLU_016902_4_4_0"/>
<dbReference type="InParanoid" id="O67638"/>
<dbReference type="OrthoDB" id="9807829at2"/>
<dbReference type="Proteomes" id="UP000000798">
    <property type="component" value="Chromosome"/>
</dbReference>
<dbReference type="GO" id="GO:0009982">
    <property type="term" value="F:pseudouridine synthase activity"/>
    <property type="evidence" value="ECO:0000318"/>
    <property type="project" value="GO_Central"/>
</dbReference>
<dbReference type="GO" id="GO:0003723">
    <property type="term" value="F:RNA binding"/>
    <property type="evidence" value="ECO:0007669"/>
    <property type="project" value="UniProtKB-KW"/>
</dbReference>
<dbReference type="GO" id="GO:0120159">
    <property type="term" value="F:rRNA pseudouridine synthase activity"/>
    <property type="evidence" value="ECO:0007669"/>
    <property type="project" value="UniProtKB-ARBA"/>
</dbReference>
<dbReference type="GO" id="GO:0000455">
    <property type="term" value="P:enzyme-directed rRNA pseudouridine synthesis"/>
    <property type="evidence" value="ECO:0000318"/>
    <property type="project" value="GO_Central"/>
</dbReference>
<dbReference type="CDD" id="cd02869">
    <property type="entry name" value="PseudoU_synth_RluA_like"/>
    <property type="match status" value="1"/>
</dbReference>
<dbReference type="CDD" id="cd00165">
    <property type="entry name" value="S4"/>
    <property type="match status" value="1"/>
</dbReference>
<dbReference type="FunFam" id="3.30.2350.10:FF:000006">
    <property type="entry name" value="Pseudouridine synthase"/>
    <property type="match status" value="1"/>
</dbReference>
<dbReference type="Gene3D" id="3.30.2350.10">
    <property type="entry name" value="Pseudouridine synthase"/>
    <property type="match status" value="1"/>
</dbReference>
<dbReference type="Gene3D" id="3.10.290.10">
    <property type="entry name" value="RNA-binding S4 domain"/>
    <property type="match status" value="1"/>
</dbReference>
<dbReference type="InterPro" id="IPR020103">
    <property type="entry name" value="PsdUridine_synth_cat_dom_sf"/>
</dbReference>
<dbReference type="InterPro" id="IPR006224">
    <property type="entry name" value="PsdUridine_synth_RluA-like_CS"/>
</dbReference>
<dbReference type="InterPro" id="IPR006225">
    <property type="entry name" value="PsdUridine_synth_RluC/D"/>
</dbReference>
<dbReference type="InterPro" id="IPR006145">
    <property type="entry name" value="PsdUridine_synth_RsuA/RluA"/>
</dbReference>
<dbReference type="InterPro" id="IPR050188">
    <property type="entry name" value="RluA_PseudoU_synthase"/>
</dbReference>
<dbReference type="InterPro" id="IPR002942">
    <property type="entry name" value="S4_RNA-bd"/>
</dbReference>
<dbReference type="InterPro" id="IPR036986">
    <property type="entry name" value="S4_RNA-bd_sf"/>
</dbReference>
<dbReference type="NCBIfam" id="TIGR00005">
    <property type="entry name" value="rluA_subfam"/>
    <property type="match status" value="1"/>
</dbReference>
<dbReference type="PANTHER" id="PTHR21600">
    <property type="entry name" value="MITOCHONDRIAL RNA PSEUDOURIDINE SYNTHASE"/>
    <property type="match status" value="1"/>
</dbReference>
<dbReference type="PANTHER" id="PTHR21600:SF44">
    <property type="entry name" value="RIBOSOMAL LARGE SUBUNIT PSEUDOURIDINE SYNTHASE D"/>
    <property type="match status" value="1"/>
</dbReference>
<dbReference type="Pfam" id="PF00849">
    <property type="entry name" value="PseudoU_synth_2"/>
    <property type="match status" value="1"/>
</dbReference>
<dbReference type="Pfam" id="PF01479">
    <property type="entry name" value="S4"/>
    <property type="match status" value="1"/>
</dbReference>
<dbReference type="SMART" id="SM00363">
    <property type="entry name" value="S4"/>
    <property type="match status" value="1"/>
</dbReference>
<dbReference type="SUPFAM" id="SSF55174">
    <property type="entry name" value="Alpha-L RNA-binding motif"/>
    <property type="match status" value="1"/>
</dbReference>
<dbReference type="SUPFAM" id="SSF55120">
    <property type="entry name" value="Pseudouridine synthase"/>
    <property type="match status" value="1"/>
</dbReference>
<dbReference type="PROSITE" id="PS01129">
    <property type="entry name" value="PSI_RLU"/>
    <property type="match status" value="1"/>
</dbReference>
<dbReference type="PROSITE" id="PS50889">
    <property type="entry name" value="S4"/>
    <property type="match status" value="1"/>
</dbReference>
<protein>
    <recommendedName>
        <fullName>Uncharacterized RNA pseudouridine synthase aq_1758</fullName>
        <ecNumber>5.4.99.-</ecNumber>
    </recommendedName>
    <alternativeName>
        <fullName>RNA pseudouridylate synthase</fullName>
    </alternativeName>
    <alternativeName>
        <fullName>RNA-uridine isomerase</fullName>
    </alternativeName>
</protein>